<gene>
    <name type="ordered locus">VSAL_I1728</name>
</gene>
<keyword id="KW-0547">Nucleotide-binding</keyword>
<reference key="1">
    <citation type="journal article" date="2008" name="BMC Genomics">
        <title>The genome sequence of the fish pathogen Aliivibrio salmonicida strain LFI1238 shows extensive evidence of gene decay.</title>
        <authorList>
            <person name="Hjerde E."/>
            <person name="Lorentzen M.S."/>
            <person name="Holden M.T."/>
            <person name="Seeger K."/>
            <person name="Paulsen S."/>
            <person name="Bason N."/>
            <person name="Churcher C."/>
            <person name="Harris D."/>
            <person name="Norbertczak H."/>
            <person name="Quail M.A."/>
            <person name="Sanders S."/>
            <person name="Thurston S."/>
            <person name="Parkhill J."/>
            <person name="Willassen N.P."/>
            <person name="Thomson N.R."/>
        </authorList>
    </citation>
    <scope>NUCLEOTIDE SEQUENCE [LARGE SCALE GENOMIC DNA]</scope>
    <source>
        <strain>LFI1238</strain>
    </source>
</reference>
<feature type="chain" id="PRO_1000130595" description="Nucleotide-binding protein VSAL_I1728">
    <location>
        <begin position="1"/>
        <end position="160"/>
    </location>
</feature>
<comment type="function">
    <text evidence="1">Nucleotide-binding protein.</text>
</comment>
<comment type="similarity">
    <text evidence="1">Belongs to the YajQ family.</text>
</comment>
<evidence type="ECO:0000255" key="1">
    <source>
        <dbReference type="HAMAP-Rule" id="MF_00632"/>
    </source>
</evidence>
<name>Y1728_ALISL</name>
<dbReference type="EMBL" id="FM178379">
    <property type="protein sequence ID" value="CAQ79413.1"/>
    <property type="molecule type" value="Genomic_DNA"/>
</dbReference>
<dbReference type="RefSeq" id="WP_012550333.1">
    <property type="nucleotide sequence ID" value="NC_011312.1"/>
</dbReference>
<dbReference type="SMR" id="B6EN03"/>
<dbReference type="KEGG" id="vsa:VSAL_I1728"/>
<dbReference type="eggNOG" id="COG1666">
    <property type="taxonomic scope" value="Bacteria"/>
</dbReference>
<dbReference type="HOGENOM" id="CLU_099839_1_0_6"/>
<dbReference type="Proteomes" id="UP000001730">
    <property type="component" value="Chromosome 1"/>
</dbReference>
<dbReference type="GO" id="GO:0005829">
    <property type="term" value="C:cytosol"/>
    <property type="evidence" value="ECO:0007669"/>
    <property type="project" value="TreeGrafter"/>
</dbReference>
<dbReference type="GO" id="GO:0000166">
    <property type="term" value="F:nucleotide binding"/>
    <property type="evidence" value="ECO:0007669"/>
    <property type="project" value="TreeGrafter"/>
</dbReference>
<dbReference type="CDD" id="cd11740">
    <property type="entry name" value="YajQ_like"/>
    <property type="match status" value="1"/>
</dbReference>
<dbReference type="FunFam" id="3.30.70.990:FF:000001">
    <property type="entry name" value="UPF0234 protein YajQ"/>
    <property type="match status" value="1"/>
</dbReference>
<dbReference type="Gene3D" id="3.30.70.860">
    <property type="match status" value="1"/>
</dbReference>
<dbReference type="Gene3D" id="3.30.70.990">
    <property type="entry name" value="YajQ-like, domain 2"/>
    <property type="match status" value="1"/>
</dbReference>
<dbReference type="HAMAP" id="MF_00632">
    <property type="entry name" value="YajQ"/>
    <property type="match status" value="1"/>
</dbReference>
<dbReference type="InterPro" id="IPR007551">
    <property type="entry name" value="DUF520"/>
</dbReference>
<dbReference type="InterPro" id="IPR035571">
    <property type="entry name" value="UPF0234-like_C"/>
</dbReference>
<dbReference type="InterPro" id="IPR035570">
    <property type="entry name" value="UPF0234_N"/>
</dbReference>
<dbReference type="InterPro" id="IPR036183">
    <property type="entry name" value="YajQ-like_sf"/>
</dbReference>
<dbReference type="NCBIfam" id="NF003819">
    <property type="entry name" value="PRK05412.1"/>
    <property type="match status" value="1"/>
</dbReference>
<dbReference type="PANTHER" id="PTHR30476">
    <property type="entry name" value="UPF0234 PROTEIN YAJQ"/>
    <property type="match status" value="1"/>
</dbReference>
<dbReference type="PANTHER" id="PTHR30476:SF0">
    <property type="entry name" value="UPF0234 PROTEIN YAJQ"/>
    <property type="match status" value="1"/>
</dbReference>
<dbReference type="Pfam" id="PF04461">
    <property type="entry name" value="DUF520"/>
    <property type="match status" value="1"/>
</dbReference>
<dbReference type="SUPFAM" id="SSF89963">
    <property type="entry name" value="YajQ-like"/>
    <property type="match status" value="2"/>
</dbReference>
<proteinExistence type="inferred from homology"/>
<sequence length="160" mass="17977">MPAFDIVSEVDNVELKNAVDNATRELATRFDFRGVDASFELKGENIKIKAEDDFQLTQLVDILRGNLAKRGVDARSMDVKDAVHSGKNFYQDIDFKQGIDPLISKKLVKEIKASKVKVQAAIQGEQLRITGKNRDDLQAAMAIVREGDFGQPFQFTNFRD</sequence>
<accession>B6EN03</accession>
<organism>
    <name type="scientific">Aliivibrio salmonicida (strain LFI1238)</name>
    <name type="common">Vibrio salmonicida (strain LFI1238)</name>
    <dbReference type="NCBI Taxonomy" id="316275"/>
    <lineage>
        <taxon>Bacteria</taxon>
        <taxon>Pseudomonadati</taxon>
        <taxon>Pseudomonadota</taxon>
        <taxon>Gammaproteobacteria</taxon>
        <taxon>Vibrionales</taxon>
        <taxon>Vibrionaceae</taxon>
        <taxon>Aliivibrio</taxon>
    </lineage>
</organism>
<protein>
    <recommendedName>
        <fullName evidence="1">Nucleotide-binding protein VSAL_I1728</fullName>
    </recommendedName>
</protein>